<accession>A8Y7P2</accession>
<organism>
    <name type="scientific">Daboia siamensis</name>
    <name type="common">Eastern Russel's viper</name>
    <name type="synonym">Daboia russelii siamensis</name>
    <dbReference type="NCBI Taxonomy" id="343250"/>
    <lineage>
        <taxon>Eukaryota</taxon>
        <taxon>Metazoa</taxon>
        <taxon>Chordata</taxon>
        <taxon>Craniata</taxon>
        <taxon>Vertebrata</taxon>
        <taxon>Euteleostomi</taxon>
        <taxon>Lepidosauria</taxon>
        <taxon>Squamata</taxon>
        <taxon>Bifurcata</taxon>
        <taxon>Unidentata</taxon>
        <taxon>Episquamata</taxon>
        <taxon>Toxicofera</taxon>
        <taxon>Serpentes</taxon>
        <taxon>Colubroidea</taxon>
        <taxon>Viperidae</taxon>
        <taxon>Viperinae</taxon>
        <taxon>Daboia</taxon>
    </lineage>
</organism>
<reference key="1">
    <citation type="submission" date="2006-11" db="EMBL/GenBank/DDBJ databases">
        <title>BPTI petides from Burmese Daboia russellii siamensis.</title>
        <authorList>
            <person name="Guo C."/>
            <person name="McClean S."/>
            <person name="Shaw C."/>
            <person name="Rao P."/>
            <person name="Ye M."/>
            <person name="Anthony John B."/>
        </authorList>
    </citation>
    <scope>NUCLEOTIDE SEQUENCE [MRNA]</scope>
    <source>
        <strain>Burma</strain>
        <tissue>Venom gland</tissue>
    </source>
</reference>
<sequence>MSSGGLLLLLGLLTLWAELTPISGHDRPTFCNLAPESGRCRGHLRRIYYNLESNKCNVFFYGGCGGNDNNFETRDECRQTCGGK</sequence>
<feature type="signal peptide" evidence="1">
    <location>
        <begin position="1"/>
        <end position="24"/>
    </location>
</feature>
<feature type="chain" id="PRO_5000284435" description="Kunitz-type serine protease inhibitor B2">
    <location>
        <begin position="25"/>
        <end position="84"/>
    </location>
</feature>
<feature type="domain" description="BPTI/Kunitz inhibitor" evidence="2">
    <location>
        <begin position="31"/>
        <end position="81"/>
    </location>
</feature>
<feature type="site" description="Reactive bond for trypsin" evidence="1">
    <location>
        <begin position="41"/>
        <end position="42"/>
    </location>
</feature>
<feature type="disulfide bond" evidence="2">
    <location>
        <begin position="31"/>
        <end position="81"/>
    </location>
</feature>
<feature type="disulfide bond" evidence="2">
    <location>
        <begin position="40"/>
        <end position="64"/>
    </location>
</feature>
<feature type="disulfide bond" evidence="2">
    <location>
        <begin position="56"/>
        <end position="77"/>
    </location>
</feature>
<name>VKTB2_DABSI</name>
<evidence type="ECO:0000250" key="1"/>
<evidence type="ECO:0000255" key="2">
    <source>
        <dbReference type="PROSITE-ProRule" id="PRU00031"/>
    </source>
</evidence>
<evidence type="ECO:0000305" key="3"/>
<dbReference type="EMBL" id="AM411369">
    <property type="protein sequence ID" value="CAL69610.1"/>
    <property type="molecule type" value="mRNA"/>
</dbReference>
<dbReference type="SMR" id="A8Y7P2"/>
<dbReference type="MEROPS" id="I02.062"/>
<dbReference type="GO" id="GO:0005615">
    <property type="term" value="C:extracellular space"/>
    <property type="evidence" value="ECO:0007669"/>
    <property type="project" value="TreeGrafter"/>
</dbReference>
<dbReference type="GO" id="GO:0004867">
    <property type="term" value="F:serine-type endopeptidase inhibitor activity"/>
    <property type="evidence" value="ECO:0007669"/>
    <property type="project" value="UniProtKB-KW"/>
</dbReference>
<dbReference type="FunFam" id="4.10.410.10:FF:000021">
    <property type="entry name" value="Serine protease inhibitor, putative"/>
    <property type="match status" value="1"/>
</dbReference>
<dbReference type="Gene3D" id="4.10.410.10">
    <property type="entry name" value="Pancreatic trypsin inhibitor Kunitz domain"/>
    <property type="match status" value="1"/>
</dbReference>
<dbReference type="InterPro" id="IPR002223">
    <property type="entry name" value="Kunitz_BPTI"/>
</dbReference>
<dbReference type="InterPro" id="IPR036880">
    <property type="entry name" value="Kunitz_BPTI_sf"/>
</dbReference>
<dbReference type="InterPro" id="IPR020901">
    <property type="entry name" value="Prtase_inh_Kunz-CS"/>
</dbReference>
<dbReference type="InterPro" id="IPR050098">
    <property type="entry name" value="TFPI/VKTCI-like"/>
</dbReference>
<dbReference type="PANTHER" id="PTHR10083:SF374">
    <property type="entry name" value="BPTI_KUNITZ INHIBITOR DOMAIN-CONTAINING PROTEIN"/>
    <property type="match status" value="1"/>
</dbReference>
<dbReference type="PANTHER" id="PTHR10083">
    <property type="entry name" value="KUNITZ-TYPE PROTEASE INHIBITOR-RELATED"/>
    <property type="match status" value="1"/>
</dbReference>
<dbReference type="Pfam" id="PF00014">
    <property type="entry name" value="Kunitz_BPTI"/>
    <property type="match status" value="1"/>
</dbReference>
<dbReference type="PRINTS" id="PR00759">
    <property type="entry name" value="BASICPTASE"/>
</dbReference>
<dbReference type="SMART" id="SM00131">
    <property type="entry name" value="KU"/>
    <property type="match status" value="1"/>
</dbReference>
<dbReference type="SUPFAM" id="SSF57362">
    <property type="entry name" value="BPTI-like"/>
    <property type="match status" value="1"/>
</dbReference>
<dbReference type="PROSITE" id="PS00280">
    <property type="entry name" value="BPTI_KUNITZ_1"/>
    <property type="match status" value="1"/>
</dbReference>
<dbReference type="PROSITE" id="PS50279">
    <property type="entry name" value="BPTI_KUNITZ_2"/>
    <property type="match status" value="1"/>
</dbReference>
<comment type="function">
    <text evidence="1">Serine protease inhibitor that inhibits trypsin.</text>
</comment>
<comment type="subcellular location">
    <subcellularLocation>
        <location evidence="1">Secreted</location>
    </subcellularLocation>
</comment>
<comment type="tissue specificity">
    <text>Expressed by the venom gland.</text>
</comment>
<comment type="similarity">
    <text evidence="3">Belongs to the venom Kunitz-type family.</text>
</comment>
<proteinExistence type="evidence at transcript level"/>
<protein>
    <recommendedName>
        <fullName>Kunitz-type serine protease inhibitor B2</fullName>
    </recommendedName>
    <alternativeName>
        <fullName>BPTI-2</fullName>
    </alternativeName>
    <alternativeName>
        <fullName>Trypsin inhibitor 2</fullName>
    </alternativeName>
    <alternativeName>
        <fullName>Trypsin inhibitor B2</fullName>
    </alternativeName>
</protein>
<keyword id="KW-1015">Disulfide bond</keyword>
<keyword id="KW-0646">Protease inhibitor</keyword>
<keyword id="KW-0964">Secreted</keyword>
<keyword id="KW-0722">Serine protease inhibitor</keyword>
<keyword id="KW-0732">Signal</keyword>